<organism>
    <name type="scientific">Methanocaldococcus jannaschii (strain ATCC 43067 / DSM 2661 / JAL-1 / JCM 10045 / NBRC 100440)</name>
    <name type="common">Methanococcus jannaschii</name>
    <dbReference type="NCBI Taxonomy" id="243232"/>
    <lineage>
        <taxon>Archaea</taxon>
        <taxon>Methanobacteriati</taxon>
        <taxon>Methanobacteriota</taxon>
        <taxon>Methanomada group</taxon>
        <taxon>Methanococci</taxon>
        <taxon>Methanococcales</taxon>
        <taxon>Methanocaldococcaceae</taxon>
        <taxon>Methanocaldococcus</taxon>
    </lineage>
</organism>
<name>CBIH_METJA</name>
<proteinExistence type="inferred from homology"/>
<sequence>MLYVVGIGSGNERHFTKEAEEILNKVDLIVCYKNYKKFVERLNKPIYTTGMTREIDRVDYALKEAKDKDVALVSSGDATIYGLASLAYEINAVKGYNVDIKVVPGITACSLASAILGSPLNHDFVVISFSDLLTPLETILKRFRCALEGDFVICIYNPLSKRRKEPFLKAMEILAEFAKDKDYIIGIVKNAGRNKEEVVITNFKDLYKNLEKYLEFIDMNTILIIGNSSTKIINGKMITPRGYLDKYKI</sequence>
<gene>
    <name type="primary">cbiH</name>
    <name type="synonym">cobJ</name>
    <name type="ordered locus">MJ0813</name>
</gene>
<feature type="chain" id="PRO_0000150403" description="Probable cobalt-factor III C(17)-methyltransferase">
    <location>
        <begin position="1"/>
        <end position="249"/>
    </location>
</feature>
<reference key="1">
    <citation type="journal article" date="1996" name="Science">
        <title>Complete genome sequence of the methanogenic archaeon, Methanococcus jannaschii.</title>
        <authorList>
            <person name="Bult C.J."/>
            <person name="White O."/>
            <person name="Olsen G.J."/>
            <person name="Zhou L."/>
            <person name="Fleischmann R.D."/>
            <person name="Sutton G.G."/>
            <person name="Blake J.A."/>
            <person name="FitzGerald L.M."/>
            <person name="Clayton R.A."/>
            <person name="Gocayne J.D."/>
            <person name="Kerlavage A.R."/>
            <person name="Dougherty B.A."/>
            <person name="Tomb J.-F."/>
            <person name="Adams M.D."/>
            <person name="Reich C.I."/>
            <person name="Overbeek R."/>
            <person name="Kirkness E.F."/>
            <person name="Weinstock K.G."/>
            <person name="Merrick J.M."/>
            <person name="Glodek A."/>
            <person name="Scott J.L."/>
            <person name="Geoghagen N.S.M."/>
            <person name="Weidman J.F."/>
            <person name="Fuhrmann J.L."/>
            <person name="Nguyen D."/>
            <person name="Utterback T.R."/>
            <person name="Kelley J.M."/>
            <person name="Peterson J.D."/>
            <person name="Sadow P.W."/>
            <person name="Hanna M.C."/>
            <person name="Cotton M.D."/>
            <person name="Roberts K.M."/>
            <person name="Hurst M.A."/>
            <person name="Kaine B.P."/>
            <person name="Borodovsky M."/>
            <person name="Klenk H.-P."/>
            <person name="Fraser C.M."/>
            <person name="Smith H.O."/>
            <person name="Woese C.R."/>
            <person name="Venter J.C."/>
        </authorList>
    </citation>
    <scope>NUCLEOTIDE SEQUENCE [LARGE SCALE GENOMIC DNA]</scope>
    <source>
        <strain>ATCC 43067 / DSM 2661 / JAL-1 / JCM 10045 / NBRC 100440</strain>
    </source>
</reference>
<dbReference type="EC" id="2.1.1.-"/>
<dbReference type="EMBL" id="L77117">
    <property type="protein sequence ID" value="AAB98812.1"/>
    <property type="molecule type" value="Genomic_DNA"/>
</dbReference>
<dbReference type="PIR" id="E64401">
    <property type="entry name" value="E64401"/>
</dbReference>
<dbReference type="RefSeq" id="WP_010870324.1">
    <property type="nucleotide sequence ID" value="NC_000909.1"/>
</dbReference>
<dbReference type="SMR" id="Q58223"/>
<dbReference type="FunCoup" id="Q58223">
    <property type="interactions" value="110"/>
</dbReference>
<dbReference type="STRING" id="243232.MJ_0813"/>
<dbReference type="PaxDb" id="243232-MJ_0813"/>
<dbReference type="EnsemblBacteria" id="AAB98812">
    <property type="protein sequence ID" value="AAB98812"/>
    <property type="gene ID" value="MJ_0813"/>
</dbReference>
<dbReference type="GeneID" id="1451696"/>
<dbReference type="KEGG" id="mja:MJ_0813"/>
<dbReference type="eggNOG" id="arCOG00647">
    <property type="taxonomic scope" value="Archaea"/>
</dbReference>
<dbReference type="HOGENOM" id="CLU_047948_2_0_2"/>
<dbReference type="InParanoid" id="Q58223"/>
<dbReference type="OrthoDB" id="35891at2157"/>
<dbReference type="PhylomeDB" id="Q58223"/>
<dbReference type="UniPathway" id="UPA00148">
    <property type="reaction ID" value="UER00225"/>
</dbReference>
<dbReference type="Proteomes" id="UP000000805">
    <property type="component" value="Chromosome"/>
</dbReference>
<dbReference type="GO" id="GO:0008168">
    <property type="term" value="F:methyltransferase activity"/>
    <property type="evidence" value="ECO:0007669"/>
    <property type="project" value="UniProtKB-KW"/>
</dbReference>
<dbReference type="GO" id="GO:0009236">
    <property type="term" value="P:cobalamin biosynthetic process"/>
    <property type="evidence" value="ECO:0007669"/>
    <property type="project" value="UniProtKB-UniPathway"/>
</dbReference>
<dbReference type="GO" id="GO:0032259">
    <property type="term" value="P:methylation"/>
    <property type="evidence" value="ECO:0007669"/>
    <property type="project" value="UniProtKB-KW"/>
</dbReference>
<dbReference type="CDD" id="cd11646">
    <property type="entry name" value="Precorrin_3B_C17_MT"/>
    <property type="match status" value="1"/>
</dbReference>
<dbReference type="Gene3D" id="3.40.1010.10">
    <property type="entry name" value="Cobalt-precorrin-4 Transmethylase, Domain 1"/>
    <property type="match status" value="1"/>
</dbReference>
<dbReference type="Gene3D" id="3.30.950.10">
    <property type="entry name" value="Methyltransferase, Cobalt-precorrin-4 Transmethylase, Domain 2"/>
    <property type="match status" value="1"/>
</dbReference>
<dbReference type="InterPro" id="IPR000878">
    <property type="entry name" value="4pyrrol_Mease"/>
</dbReference>
<dbReference type="InterPro" id="IPR035996">
    <property type="entry name" value="4pyrrol_Methylase_sf"/>
</dbReference>
<dbReference type="InterPro" id="IPR014777">
    <property type="entry name" value="4pyrrole_Mease_sub1"/>
</dbReference>
<dbReference type="InterPro" id="IPR014776">
    <property type="entry name" value="4pyrrole_Mease_sub2"/>
</dbReference>
<dbReference type="InterPro" id="IPR006363">
    <property type="entry name" value="Cbl_synth_CobJ/CibH_dom"/>
</dbReference>
<dbReference type="InterPro" id="IPR051810">
    <property type="entry name" value="Precorrin_MeTrfase"/>
</dbReference>
<dbReference type="NCBIfam" id="TIGR01466">
    <property type="entry name" value="cobJ_cbiH"/>
    <property type="match status" value="1"/>
</dbReference>
<dbReference type="PANTHER" id="PTHR47036">
    <property type="entry name" value="COBALT-FACTOR III C(17)-METHYLTRANSFERASE-RELATED"/>
    <property type="match status" value="1"/>
</dbReference>
<dbReference type="PANTHER" id="PTHR47036:SF1">
    <property type="entry name" value="COBALT-FACTOR III C(17)-METHYLTRANSFERASE-RELATED"/>
    <property type="match status" value="1"/>
</dbReference>
<dbReference type="Pfam" id="PF00590">
    <property type="entry name" value="TP_methylase"/>
    <property type="match status" value="1"/>
</dbReference>
<dbReference type="SUPFAM" id="SSF53790">
    <property type="entry name" value="Tetrapyrrole methylase"/>
    <property type="match status" value="1"/>
</dbReference>
<accession>Q58223</accession>
<comment type="function">
    <text evidence="1">Methyltransferase that likely catalyzes the ring contraction and methylation of C-17 in cobalt-factor III to form cobalt-factor IV. May also convert cobalt-precorrin-3 to cobalt-precorrin-4 (By similarity).</text>
</comment>
<comment type="catalytic activity">
    <reaction>
        <text>Co(II)-factor III + S-adenosyl-L-methionine + H(+) = Co(II)-factor IV + S-adenosyl-L-homocysteine</text>
        <dbReference type="Rhea" id="RHEA:45852"/>
        <dbReference type="ChEBI" id="CHEBI:15378"/>
        <dbReference type="ChEBI" id="CHEBI:57856"/>
        <dbReference type="ChEBI" id="CHEBI:59789"/>
        <dbReference type="ChEBI" id="CHEBI:73299"/>
        <dbReference type="ChEBI" id="CHEBI:85471"/>
    </reaction>
</comment>
<comment type="pathway">
    <text>Cofactor biosynthesis; adenosylcobalamin biosynthesis; cob(II)yrinate a,c-diamide from sirohydrochlorin (anaerobic route): step 3/10.</text>
</comment>
<comment type="similarity">
    <text evidence="2">Belongs to the precorrin methyltransferase family.</text>
</comment>
<protein>
    <recommendedName>
        <fullName>Probable cobalt-factor III C(17)-methyltransferase</fullName>
        <ecNumber>2.1.1.-</ecNumber>
    </recommendedName>
    <alternativeName>
        <fullName>Cobalt-precorrin-3 methyltransferase</fullName>
        <shortName>Cobalt-precorrin-3 methylase</shortName>
    </alternativeName>
</protein>
<keyword id="KW-0169">Cobalamin biosynthesis</keyword>
<keyword id="KW-0489">Methyltransferase</keyword>
<keyword id="KW-1185">Reference proteome</keyword>
<keyword id="KW-0949">S-adenosyl-L-methionine</keyword>
<keyword id="KW-0808">Transferase</keyword>
<evidence type="ECO:0000250" key="1"/>
<evidence type="ECO:0000305" key="2"/>